<evidence type="ECO:0000255" key="1">
    <source>
        <dbReference type="HAMAP-Rule" id="MF_00388"/>
    </source>
</evidence>
<sequence length="301" mass="33100">MKEILYRKSIQDRVRIKGIGLHSGKEVNLTAHPAPSGTGIVFEYRKGLEKASISVELSNVVDTSNATTLGDGLHKIQTVEHLLAAIYALGLTDLILEIDAVEVPIMDGSSLPFLQALESAGIVKYPEIIEPIYVQNPLWVVDGDKYLVLLPSDELKVTYTIDFNHPLLKGQNITISLDKETIKQEILPARTFGFLKDVEALQAKGLAMGGSLDNAIVLTQDGYLNQQLRFENECVRHKILDLFGDISIAGRPIIGHYLASKAGHALDISMAKLVMSSVTGDEISKYKSRRIPLFKRKVAVV</sequence>
<feature type="chain" id="PRO_1000122800" description="UDP-3-O-acyl-N-acetylglucosamine deacetylase">
    <location>
        <begin position="1"/>
        <end position="301"/>
    </location>
</feature>
<feature type="active site" description="Proton donor" evidence="1">
    <location>
        <position position="264"/>
    </location>
</feature>
<feature type="binding site" evidence="1">
    <location>
        <position position="81"/>
    </location>
    <ligand>
        <name>Zn(2+)</name>
        <dbReference type="ChEBI" id="CHEBI:29105"/>
    </ligand>
</feature>
<feature type="binding site" evidence="1">
    <location>
        <position position="237"/>
    </location>
    <ligand>
        <name>Zn(2+)</name>
        <dbReference type="ChEBI" id="CHEBI:29105"/>
    </ligand>
</feature>
<feature type="binding site" evidence="1">
    <location>
        <position position="241"/>
    </location>
    <ligand>
        <name>Zn(2+)</name>
        <dbReference type="ChEBI" id="CHEBI:29105"/>
    </ligand>
</feature>
<protein>
    <recommendedName>
        <fullName evidence="1">UDP-3-O-acyl-N-acetylglucosamine deacetylase</fullName>
        <shortName evidence="1">UDP-3-O-acyl-GlcNAc deacetylase</shortName>
        <ecNumber evidence="1">3.5.1.108</ecNumber>
    </recommendedName>
    <alternativeName>
        <fullName evidence="1">UDP-3-O-[R-3-hydroxymyristoyl]-N-acetylglucosamine deacetylase</fullName>
    </alternativeName>
</protein>
<gene>
    <name evidence="1" type="primary">lpxC</name>
    <name type="ordered locus">LBL_1540</name>
</gene>
<keyword id="KW-0378">Hydrolase</keyword>
<keyword id="KW-0441">Lipid A biosynthesis</keyword>
<keyword id="KW-0444">Lipid biosynthesis</keyword>
<keyword id="KW-0443">Lipid metabolism</keyword>
<keyword id="KW-0479">Metal-binding</keyword>
<keyword id="KW-0862">Zinc</keyword>
<dbReference type="EC" id="3.5.1.108" evidence="1"/>
<dbReference type="EMBL" id="CP000348">
    <property type="protein sequence ID" value="ABJ79003.1"/>
    <property type="molecule type" value="Genomic_DNA"/>
</dbReference>
<dbReference type="RefSeq" id="WP_002754344.1">
    <property type="nucleotide sequence ID" value="NC_008508.1"/>
</dbReference>
<dbReference type="SMR" id="Q051J2"/>
<dbReference type="KEGG" id="lbl:LBL_1540"/>
<dbReference type="HOGENOM" id="CLU_046528_1_0_12"/>
<dbReference type="UniPathway" id="UPA00359">
    <property type="reaction ID" value="UER00478"/>
</dbReference>
<dbReference type="GO" id="GO:0016020">
    <property type="term" value="C:membrane"/>
    <property type="evidence" value="ECO:0007669"/>
    <property type="project" value="GOC"/>
</dbReference>
<dbReference type="GO" id="GO:0046872">
    <property type="term" value="F:metal ion binding"/>
    <property type="evidence" value="ECO:0007669"/>
    <property type="project" value="UniProtKB-KW"/>
</dbReference>
<dbReference type="GO" id="GO:0103117">
    <property type="term" value="F:UDP-3-O-acyl-N-acetylglucosamine deacetylase activity"/>
    <property type="evidence" value="ECO:0007669"/>
    <property type="project" value="UniProtKB-UniRule"/>
</dbReference>
<dbReference type="GO" id="GO:0009245">
    <property type="term" value="P:lipid A biosynthetic process"/>
    <property type="evidence" value="ECO:0007669"/>
    <property type="project" value="UniProtKB-UniRule"/>
</dbReference>
<dbReference type="Gene3D" id="3.30.230.20">
    <property type="entry name" value="lpxc deacetylase, domain 1"/>
    <property type="match status" value="1"/>
</dbReference>
<dbReference type="Gene3D" id="3.30.1700.10">
    <property type="entry name" value="lpxc deacetylase, domain 2"/>
    <property type="match status" value="1"/>
</dbReference>
<dbReference type="HAMAP" id="MF_00388">
    <property type="entry name" value="LpxC"/>
    <property type="match status" value="1"/>
</dbReference>
<dbReference type="InterPro" id="IPR020568">
    <property type="entry name" value="Ribosomal_Su5_D2-typ_SF"/>
</dbReference>
<dbReference type="InterPro" id="IPR004463">
    <property type="entry name" value="UDP-acyl_GlcNac_deAcase"/>
</dbReference>
<dbReference type="InterPro" id="IPR011334">
    <property type="entry name" value="UDP-acyl_GlcNac_deAcase_C"/>
</dbReference>
<dbReference type="InterPro" id="IPR015870">
    <property type="entry name" value="UDP-acyl_N-AcGlcN_deAcase_N"/>
</dbReference>
<dbReference type="NCBIfam" id="TIGR00325">
    <property type="entry name" value="lpxC"/>
    <property type="match status" value="1"/>
</dbReference>
<dbReference type="PANTHER" id="PTHR33694">
    <property type="entry name" value="UDP-3-O-ACYL-N-ACETYLGLUCOSAMINE DEACETYLASE 1, MITOCHONDRIAL-RELATED"/>
    <property type="match status" value="1"/>
</dbReference>
<dbReference type="PANTHER" id="PTHR33694:SF1">
    <property type="entry name" value="UDP-3-O-ACYL-N-ACETYLGLUCOSAMINE DEACETYLASE 1, MITOCHONDRIAL-RELATED"/>
    <property type="match status" value="1"/>
</dbReference>
<dbReference type="Pfam" id="PF03331">
    <property type="entry name" value="LpxC"/>
    <property type="match status" value="1"/>
</dbReference>
<dbReference type="SUPFAM" id="SSF54211">
    <property type="entry name" value="Ribosomal protein S5 domain 2-like"/>
    <property type="match status" value="2"/>
</dbReference>
<reference key="1">
    <citation type="journal article" date="2006" name="Proc. Natl. Acad. Sci. U.S.A.">
        <title>Genome reduction in Leptospira borgpetersenii reflects limited transmission potential.</title>
        <authorList>
            <person name="Bulach D.M."/>
            <person name="Zuerner R.L."/>
            <person name="Wilson P."/>
            <person name="Seemann T."/>
            <person name="McGrath A."/>
            <person name="Cullen P.A."/>
            <person name="Davis J."/>
            <person name="Johnson M."/>
            <person name="Kuczek E."/>
            <person name="Alt D.P."/>
            <person name="Peterson-Burch B."/>
            <person name="Coppel R.L."/>
            <person name="Rood J.I."/>
            <person name="Davies J.K."/>
            <person name="Adler B."/>
        </authorList>
    </citation>
    <scope>NUCLEOTIDE SEQUENCE [LARGE SCALE GENOMIC DNA]</scope>
    <source>
        <strain>L550</strain>
    </source>
</reference>
<name>LPXC_LEPBL</name>
<organism>
    <name type="scientific">Leptospira borgpetersenii serovar Hardjo-bovis (strain L550)</name>
    <dbReference type="NCBI Taxonomy" id="355276"/>
    <lineage>
        <taxon>Bacteria</taxon>
        <taxon>Pseudomonadati</taxon>
        <taxon>Spirochaetota</taxon>
        <taxon>Spirochaetia</taxon>
        <taxon>Leptospirales</taxon>
        <taxon>Leptospiraceae</taxon>
        <taxon>Leptospira</taxon>
    </lineage>
</organism>
<comment type="function">
    <text evidence="1">Catalyzes the hydrolysis of UDP-3-O-myristoyl-N-acetylglucosamine to form UDP-3-O-myristoylglucosamine and acetate, the committed step in lipid A biosynthesis.</text>
</comment>
<comment type="catalytic activity">
    <reaction evidence="1">
        <text>a UDP-3-O-[(3R)-3-hydroxyacyl]-N-acetyl-alpha-D-glucosamine + H2O = a UDP-3-O-[(3R)-3-hydroxyacyl]-alpha-D-glucosamine + acetate</text>
        <dbReference type="Rhea" id="RHEA:67816"/>
        <dbReference type="ChEBI" id="CHEBI:15377"/>
        <dbReference type="ChEBI" id="CHEBI:30089"/>
        <dbReference type="ChEBI" id="CHEBI:137740"/>
        <dbReference type="ChEBI" id="CHEBI:173225"/>
        <dbReference type="EC" id="3.5.1.108"/>
    </reaction>
</comment>
<comment type="cofactor">
    <cofactor evidence="1">
        <name>Zn(2+)</name>
        <dbReference type="ChEBI" id="CHEBI:29105"/>
    </cofactor>
</comment>
<comment type="pathway">
    <text evidence="1">Glycolipid biosynthesis; lipid IV(A) biosynthesis; lipid IV(A) from (3R)-3-hydroxytetradecanoyl-[acyl-carrier-protein] and UDP-N-acetyl-alpha-D-glucosamine: step 2/6.</text>
</comment>
<comment type="similarity">
    <text evidence="1">Belongs to the LpxC family.</text>
</comment>
<proteinExistence type="inferred from homology"/>
<accession>Q051J2</accession>